<comment type="function">
    <text evidence="1">Required for chromosome condensation and partitioning.</text>
</comment>
<comment type="subunit">
    <text evidence="1">Homodimer.</text>
</comment>
<comment type="subcellular location">
    <subcellularLocation>
        <location evidence="1">Cytoplasm</location>
    </subcellularLocation>
</comment>
<comment type="domain">
    <text evidence="1">Contains large globular domains required for ATP hydrolysis at each terminus and a third globular domain forming a flexible SMC hinge near the middle of the molecule. These domains are separated by coiled-coil structures.</text>
</comment>
<comment type="similarity">
    <text evidence="1">Belongs to the SMC family.</text>
</comment>
<comment type="sequence caution" evidence="2">
    <conflict type="erroneous initiation">
        <sequence resource="EMBL-CDS" id="AAU91451"/>
    </conflict>
    <text>Truncated N-terminus.</text>
</comment>
<proteinExistence type="inferred from homology"/>
<feature type="chain" id="PRO_0000409276" description="Chromosome partition protein Smc">
    <location>
        <begin position="1"/>
        <end position="1169"/>
    </location>
</feature>
<feature type="domain" description="SMC hinge">
    <location>
        <begin position="525"/>
        <end position="620"/>
    </location>
</feature>
<feature type="coiled-coil region" evidence="1">
    <location>
        <begin position="170"/>
        <end position="265"/>
    </location>
</feature>
<feature type="coiled-coil region" evidence="1">
    <location>
        <begin position="307"/>
        <end position="481"/>
    </location>
</feature>
<feature type="coiled-coil region" evidence="1">
    <location>
        <begin position="656"/>
        <end position="914"/>
    </location>
</feature>
<feature type="coiled-coil region" evidence="1">
    <location>
        <begin position="985"/>
        <end position="1014"/>
    </location>
</feature>
<feature type="binding site" evidence="1">
    <location>
        <begin position="32"/>
        <end position="39"/>
    </location>
    <ligand>
        <name>ATP</name>
        <dbReference type="ChEBI" id="CHEBI:30616"/>
    </ligand>
</feature>
<reference key="1">
    <citation type="journal article" date="2004" name="PLoS Biol.">
        <title>Genomic insights into methanotrophy: the complete genome sequence of Methylococcus capsulatus (Bath).</title>
        <authorList>
            <person name="Ward N.L."/>
            <person name="Larsen O."/>
            <person name="Sakwa J."/>
            <person name="Bruseth L."/>
            <person name="Khouri H.M."/>
            <person name="Durkin A.S."/>
            <person name="Dimitrov G."/>
            <person name="Jiang L."/>
            <person name="Scanlan D."/>
            <person name="Kang K.H."/>
            <person name="Lewis M.R."/>
            <person name="Nelson K.E."/>
            <person name="Methe B.A."/>
            <person name="Wu M."/>
            <person name="Heidelberg J.F."/>
            <person name="Paulsen I.T."/>
            <person name="Fouts D.E."/>
            <person name="Ravel J."/>
            <person name="Tettelin H."/>
            <person name="Ren Q."/>
            <person name="Read T.D."/>
            <person name="DeBoy R.T."/>
            <person name="Seshadri R."/>
            <person name="Salzberg S.L."/>
            <person name="Jensen H.B."/>
            <person name="Birkeland N.K."/>
            <person name="Nelson W.C."/>
            <person name="Dodson R.J."/>
            <person name="Grindhaug S.H."/>
            <person name="Holt I.E."/>
            <person name="Eidhammer I."/>
            <person name="Jonasen I."/>
            <person name="Vanaken S."/>
            <person name="Utterback T.R."/>
            <person name="Feldblyum T.V."/>
            <person name="Fraser C.M."/>
            <person name="Lillehaug J.R."/>
            <person name="Eisen J.A."/>
        </authorList>
    </citation>
    <scope>NUCLEOTIDE SEQUENCE [LARGE SCALE GENOMIC DNA]</scope>
    <source>
        <strain>ATCC 33009 / NCIMB 11132 / Bath</strain>
    </source>
</reference>
<name>SMC_METCA</name>
<accession>Q604U6</accession>
<dbReference type="EMBL" id="AE017282">
    <property type="protein sequence ID" value="AAU91451.1"/>
    <property type="status" value="ALT_INIT"/>
    <property type="molecule type" value="Genomic_DNA"/>
</dbReference>
<dbReference type="RefSeq" id="WP_041361299.1">
    <property type="nucleotide sequence ID" value="NC_002977.6"/>
</dbReference>
<dbReference type="SMR" id="Q604U6"/>
<dbReference type="STRING" id="243233.MCA2440"/>
<dbReference type="GeneID" id="88224641"/>
<dbReference type="KEGG" id="mca:MCA2440"/>
<dbReference type="eggNOG" id="COG1196">
    <property type="taxonomic scope" value="Bacteria"/>
</dbReference>
<dbReference type="HOGENOM" id="CLU_001042_2_2_6"/>
<dbReference type="Proteomes" id="UP000006821">
    <property type="component" value="Chromosome"/>
</dbReference>
<dbReference type="GO" id="GO:0005694">
    <property type="term" value="C:chromosome"/>
    <property type="evidence" value="ECO:0007669"/>
    <property type="project" value="InterPro"/>
</dbReference>
<dbReference type="GO" id="GO:0005737">
    <property type="term" value="C:cytoplasm"/>
    <property type="evidence" value="ECO:0007669"/>
    <property type="project" value="UniProtKB-SubCell"/>
</dbReference>
<dbReference type="GO" id="GO:0005524">
    <property type="term" value="F:ATP binding"/>
    <property type="evidence" value="ECO:0007669"/>
    <property type="project" value="UniProtKB-UniRule"/>
</dbReference>
<dbReference type="GO" id="GO:0016887">
    <property type="term" value="F:ATP hydrolysis activity"/>
    <property type="evidence" value="ECO:0007669"/>
    <property type="project" value="InterPro"/>
</dbReference>
<dbReference type="GO" id="GO:0003677">
    <property type="term" value="F:DNA binding"/>
    <property type="evidence" value="ECO:0007669"/>
    <property type="project" value="UniProtKB-UniRule"/>
</dbReference>
<dbReference type="GO" id="GO:0030261">
    <property type="term" value="P:chromosome condensation"/>
    <property type="evidence" value="ECO:0007669"/>
    <property type="project" value="InterPro"/>
</dbReference>
<dbReference type="GO" id="GO:0007059">
    <property type="term" value="P:chromosome segregation"/>
    <property type="evidence" value="ECO:0007669"/>
    <property type="project" value="UniProtKB-UniRule"/>
</dbReference>
<dbReference type="GO" id="GO:0006260">
    <property type="term" value="P:DNA replication"/>
    <property type="evidence" value="ECO:0007669"/>
    <property type="project" value="UniProtKB-UniRule"/>
</dbReference>
<dbReference type="GO" id="GO:0007062">
    <property type="term" value="P:sister chromatid cohesion"/>
    <property type="evidence" value="ECO:0007669"/>
    <property type="project" value="InterPro"/>
</dbReference>
<dbReference type="CDD" id="cd03278">
    <property type="entry name" value="ABC_SMC_barmotin"/>
    <property type="match status" value="2"/>
</dbReference>
<dbReference type="Gene3D" id="1.20.1060.20">
    <property type="match status" value="1"/>
</dbReference>
<dbReference type="Gene3D" id="3.40.50.300">
    <property type="entry name" value="P-loop containing nucleotide triphosphate hydrolases"/>
    <property type="match status" value="2"/>
</dbReference>
<dbReference type="HAMAP" id="MF_01894">
    <property type="entry name" value="Smc_prok"/>
    <property type="match status" value="1"/>
</dbReference>
<dbReference type="InterPro" id="IPR027417">
    <property type="entry name" value="P-loop_NTPase"/>
</dbReference>
<dbReference type="InterPro" id="IPR003395">
    <property type="entry name" value="RecF/RecN/SMC_N"/>
</dbReference>
<dbReference type="InterPro" id="IPR024704">
    <property type="entry name" value="SMC"/>
</dbReference>
<dbReference type="InterPro" id="IPR010935">
    <property type="entry name" value="SMC_hinge"/>
</dbReference>
<dbReference type="InterPro" id="IPR036277">
    <property type="entry name" value="SMC_hinge_sf"/>
</dbReference>
<dbReference type="InterPro" id="IPR011890">
    <property type="entry name" value="SMC_prok"/>
</dbReference>
<dbReference type="NCBIfam" id="TIGR02168">
    <property type="entry name" value="SMC_prok_B"/>
    <property type="match status" value="1"/>
</dbReference>
<dbReference type="PANTHER" id="PTHR43977">
    <property type="entry name" value="STRUCTURAL MAINTENANCE OF CHROMOSOMES PROTEIN 3"/>
    <property type="match status" value="1"/>
</dbReference>
<dbReference type="Pfam" id="PF06470">
    <property type="entry name" value="SMC_hinge"/>
    <property type="match status" value="1"/>
</dbReference>
<dbReference type="Pfam" id="PF02463">
    <property type="entry name" value="SMC_N"/>
    <property type="match status" value="1"/>
</dbReference>
<dbReference type="PIRSF" id="PIRSF005719">
    <property type="entry name" value="SMC"/>
    <property type="match status" value="1"/>
</dbReference>
<dbReference type="SMART" id="SM00968">
    <property type="entry name" value="SMC_hinge"/>
    <property type="match status" value="1"/>
</dbReference>
<dbReference type="SUPFAM" id="SSF52540">
    <property type="entry name" value="P-loop containing nucleoside triphosphate hydrolases"/>
    <property type="match status" value="1"/>
</dbReference>
<dbReference type="SUPFAM" id="SSF75553">
    <property type="entry name" value="Smc hinge domain"/>
    <property type="match status" value="1"/>
</dbReference>
<dbReference type="SUPFAM" id="SSF57997">
    <property type="entry name" value="Tropomyosin"/>
    <property type="match status" value="2"/>
</dbReference>
<sequence>MRLEKLKIAGFKSFVDPTTLPLPGNLVGVVGPNGCGKSNVIDAVRWVMGESSARHLRGETMADVIFNGSSTRKPASQASVELVFDNSSGRAGGEYARYQQIAIRRQVARDGQSSYFLNGTRCRRKDITDLFLGTGLGARSYAIIEQGTISRLIEAKPEEMREIIEEAAGISKYKERRHETEQRMRHTRENLERLADLREELGRQLGHLQRQARKAEKFIALRDEERRLKLELLGLRWRALERQLDRLKAELTDSEERFRRLTGEEHACETQLEGLNRLRGVAQEKLDVQQGRFYELGAEISRLDQFIRHTQKSRAELVQERERVEAELRKVESDRDDDRLRLEAVRAEAAELKGKLASLEQEVAEAVSVRQAAEAKLKTCREGWEALAGDRHRLEGQAALQRSRLQQLREHGQQLGGRRQRLLQQQSELEKALAALDVQAHRLEVAGIEAEREETVGAVEALAREAERQRDRLRFARERLNPARAGLHAVQGKVASLETLQRHAMGRDRSAAAAVLEAWQLSAADRLGEKIEVAPGWENAVETVLGAHLEAVCVDSLAPYLANLQAQEPAEFLALCEYRQGPVAEGTGGPRLLDYIRAPLALEGLLAGIYCASDPAEAAERARSLQPHESVVTPGGFRIGKGWVLAQKPDAGHAGALARERELRECRRRVEELEAQCRILEREASEAEVELERLESEGREARKKADELSAGLSLARSELAAAEARSEQWRHRLDQLSHELNELADQELELAEKRAEAEEALQTAERDSLRLQDVAAQRKGEWLALEEAFAAAEAAEKSLHEEVRALRSRAAMLESNAALTAAHLQRLEQQHGQTADRLAAIVQRLAESQTPLEDERSRLDALTEERGVLEAEMARQRRRLSELEADVRRVAGERQRAEHELAALRESIGQMKLAWQTAEVRRQGIEEQFAELGAAPAAVVAGLPEDAEESAWQASVIRLGEEIERLGPVNLTAMQEYQEQEARQRYLEEQDRDLTESLATLEQAIEKIDRECRARFKETFEKINAGFQRMFPKLFGGGKAALELTENNLLSAGVSVMAQPPGKRNSSIHLLSGGEKALTAAALVFAIFELNPAPFCLLDEVDAPLDDANVGRFSQLVKEMSEKVQFLFITHNKATMEIAQYLAGVTMREPGVSRIVTVDIDAAVELASV</sequence>
<evidence type="ECO:0000255" key="1">
    <source>
        <dbReference type="HAMAP-Rule" id="MF_01894"/>
    </source>
</evidence>
<evidence type="ECO:0000305" key="2"/>
<protein>
    <recommendedName>
        <fullName evidence="1">Chromosome partition protein Smc</fullName>
    </recommendedName>
</protein>
<gene>
    <name evidence="1" type="primary">smc</name>
    <name type="ordered locus">MCA2440</name>
</gene>
<keyword id="KW-0067">ATP-binding</keyword>
<keyword id="KW-0175">Coiled coil</keyword>
<keyword id="KW-0963">Cytoplasm</keyword>
<keyword id="KW-0238">DNA-binding</keyword>
<keyword id="KW-0547">Nucleotide-binding</keyword>
<keyword id="KW-1185">Reference proteome</keyword>
<organism>
    <name type="scientific">Methylococcus capsulatus (strain ATCC 33009 / NCIMB 11132 / Bath)</name>
    <dbReference type="NCBI Taxonomy" id="243233"/>
    <lineage>
        <taxon>Bacteria</taxon>
        <taxon>Pseudomonadati</taxon>
        <taxon>Pseudomonadota</taxon>
        <taxon>Gammaproteobacteria</taxon>
        <taxon>Methylococcales</taxon>
        <taxon>Methylococcaceae</taxon>
        <taxon>Methylococcus</taxon>
    </lineage>
</organism>